<gene>
    <name evidence="1" type="primary">rlmN</name>
    <name type="ordered locus">KPN78578_27960</name>
    <name type="ORF">KPN_02847</name>
</gene>
<dbReference type="EC" id="2.1.1.192" evidence="1"/>
<dbReference type="EMBL" id="CP000647">
    <property type="protein sequence ID" value="ABR78257.1"/>
    <property type="molecule type" value="Genomic_DNA"/>
</dbReference>
<dbReference type="RefSeq" id="WP_002913894.1">
    <property type="nucleotide sequence ID" value="NC_009648.1"/>
</dbReference>
<dbReference type="SMR" id="A6TCD6"/>
<dbReference type="STRING" id="272620.KPN_02847"/>
<dbReference type="PaxDb" id="272620-KPN_02847"/>
<dbReference type="EnsemblBacteria" id="ABR78257">
    <property type="protein sequence ID" value="ABR78257"/>
    <property type="gene ID" value="KPN_02847"/>
</dbReference>
<dbReference type="KEGG" id="kpn:KPN_02847"/>
<dbReference type="HOGENOM" id="CLU_029101_0_0_6"/>
<dbReference type="Proteomes" id="UP000000265">
    <property type="component" value="Chromosome"/>
</dbReference>
<dbReference type="GO" id="GO:0005737">
    <property type="term" value="C:cytoplasm"/>
    <property type="evidence" value="ECO:0007669"/>
    <property type="project" value="UniProtKB-SubCell"/>
</dbReference>
<dbReference type="GO" id="GO:0051539">
    <property type="term" value="F:4 iron, 4 sulfur cluster binding"/>
    <property type="evidence" value="ECO:0007669"/>
    <property type="project" value="UniProtKB-UniRule"/>
</dbReference>
<dbReference type="GO" id="GO:0046872">
    <property type="term" value="F:metal ion binding"/>
    <property type="evidence" value="ECO:0007669"/>
    <property type="project" value="UniProtKB-KW"/>
</dbReference>
<dbReference type="GO" id="GO:0070040">
    <property type="term" value="F:rRNA (adenine(2503)-C2-)-methyltransferase activity"/>
    <property type="evidence" value="ECO:0007669"/>
    <property type="project" value="UniProtKB-UniRule"/>
</dbReference>
<dbReference type="GO" id="GO:0019843">
    <property type="term" value="F:rRNA binding"/>
    <property type="evidence" value="ECO:0007669"/>
    <property type="project" value="UniProtKB-UniRule"/>
</dbReference>
<dbReference type="GO" id="GO:0002935">
    <property type="term" value="F:tRNA (adenine(37)-C2)-methyltransferase activity"/>
    <property type="evidence" value="ECO:0007669"/>
    <property type="project" value="UniProtKB-UniRule"/>
</dbReference>
<dbReference type="GO" id="GO:0000049">
    <property type="term" value="F:tRNA binding"/>
    <property type="evidence" value="ECO:0007669"/>
    <property type="project" value="UniProtKB-UniRule"/>
</dbReference>
<dbReference type="GO" id="GO:0070475">
    <property type="term" value="P:rRNA base methylation"/>
    <property type="evidence" value="ECO:0007669"/>
    <property type="project" value="UniProtKB-UniRule"/>
</dbReference>
<dbReference type="GO" id="GO:0030488">
    <property type="term" value="P:tRNA methylation"/>
    <property type="evidence" value="ECO:0007669"/>
    <property type="project" value="UniProtKB-UniRule"/>
</dbReference>
<dbReference type="CDD" id="cd01335">
    <property type="entry name" value="Radical_SAM"/>
    <property type="match status" value="1"/>
</dbReference>
<dbReference type="FunFam" id="1.10.150.530:FF:000001">
    <property type="entry name" value="Dual-specificity RNA methyltransferase RlmN"/>
    <property type="match status" value="1"/>
</dbReference>
<dbReference type="FunFam" id="3.20.20.70:FF:000008">
    <property type="entry name" value="Dual-specificity RNA methyltransferase RlmN"/>
    <property type="match status" value="1"/>
</dbReference>
<dbReference type="Gene3D" id="1.10.150.530">
    <property type="match status" value="1"/>
</dbReference>
<dbReference type="Gene3D" id="3.20.20.70">
    <property type="entry name" value="Aldolase class I"/>
    <property type="match status" value="1"/>
</dbReference>
<dbReference type="HAMAP" id="MF_01849">
    <property type="entry name" value="RNA_methyltr_RlmN"/>
    <property type="match status" value="1"/>
</dbReference>
<dbReference type="InterPro" id="IPR013785">
    <property type="entry name" value="Aldolase_TIM"/>
</dbReference>
<dbReference type="InterPro" id="IPR040072">
    <property type="entry name" value="Methyltransferase_A"/>
</dbReference>
<dbReference type="InterPro" id="IPR048641">
    <property type="entry name" value="RlmN_N"/>
</dbReference>
<dbReference type="InterPro" id="IPR027492">
    <property type="entry name" value="RNA_MTrfase_RlmN"/>
</dbReference>
<dbReference type="InterPro" id="IPR004383">
    <property type="entry name" value="rRNA_lsu_MTrfase_RlmN/Cfr"/>
</dbReference>
<dbReference type="InterPro" id="IPR007197">
    <property type="entry name" value="rSAM"/>
</dbReference>
<dbReference type="NCBIfam" id="NF008396">
    <property type="entry name" value="PRK11194.1"/>
    <property type="match status" value="1"/>
</dbReference>
<dbReference type="NCBIfam" id="TIGR00048">
    <property type="entry name" value="rRNA_mod_RlmN"/>
    <property type="match status" value="1"/>
</dbReference>
<dbReference type="PANTHER" id="PTHR30544">
    <property type="entry name" value="23S RRNA METHYLTRANSFERASE"/>
    <property type="match status" value="1"/>
</dbReference>
<dbReference type="PANTHER" id="PTHR30544:SF5">
    <property type="entry name" value="RADICAL SAM CORE DOMAIN-CONTAINING PROTEIN"/>
    <property type="match status" value="1"/>
</dbReference>
<dbReference type="Pfam" id="PF04055">
    <property type="entry name" value="Radical_SAM"/>
    <property type="match status" value="1"/>
</dbReference>
<dbReference type="Pfam" id="PF21016">
    <property type="entry name" value="RlmN_N"/>
    <property type="match status" value="1"/>
</dbReference>
<dbReference type="PIRSF" id="PIRSF006004">
    <property type="entry name" value="CHP00048"/>
    <property type="match status" value="1"/>
</dbReference>
<dbReference type="SFLD" id="SFLDF00275">
    <property type="entry name" value="adenosine_C2_methyltransferase"/>
    <property type="match status" value="1"/>
</dbReference>
<dbReference type="SFLD" id="SFLDG01062">
    <property type="entry name" value="methyltransferase_(Class_A)"/>
    <property type="match status" value="1"/>
</dbReference>
<dbReference type="SUPFAM" id="SSF102114">
    <property type="entry name" value="Radical SAM enzymes"/>
    <property type="match status" value="1"/>
</dbReference>
<dbReference type="PROSITE" id="PS51918">
    <property type="entry name" value="RADICAL_SAM"/>
    <property type="match status" value="1"/>
</dbReference>
<reference key="1">
    <citation type="submission" date="2006-09" db="EMBL/GenBank/DDBJ databases">
        <authorList>
            <consortium name="The Klebsiella pneumonia Genome Sequencing Project"/>
            <person name="McClelland M."/>
            <person name="Sanderson E.K."/>
            <person name="Spieth J."/>
            <person name="Clifton W.S."/>
            <person name="Latreille P."/>
            <person name="Sabo A."/>
            <person name="Pepin K."/>
            <person name="Bhonagiri V."/>
            <person name="Porwollik S."/>
            <person name="Ali J."/>
            <person name="Wilson R.K."/>
        </authorList>
    </citation>
    <scope>NUCLEOTIDE SEQUENCE [LARGE SCALE GENOMIC DNA]</scope>
    <source>
        <strain>ATCC 700721 / MGH 78578</strain>
    </source>
</reference>
<accession>A6TCD6</accession>
<name>RLMN_KLEP7</name>
<sequence>MSEQIVTPDTAALTVPNKDAKINLLDLNRQQMREFFKNMGEKPFRADQVMKWMYHYCCDDFDEMTDINKVLRSKLKEVAEIRAPEVVEEQRSTDGTIKWAIAVGDQRVETVYIPEEDRATLCVSSQVGCALECKFCSTAQQGFNRNLRVSEIIGQVWRAAKIVGAVKTTGVRPITNVVMMGMGEPLLNLNNVVPAMEIMLDDFGFGLSKRRVTLSTSGVVPALDKLGDMIDVALAISLHAPNDTIRDEIVPINKKYNIETFLNSVRGYISKSNANQGRVTIEYVMLDHVNDGTEHAHELAALLKDTPCKINLIPWNPFPGAPYGRSSNSRIDRFSKVLMEYGFTTIVRKTRGDDIDAACGQLAGDVIDRTKRTLRKRMQGEAIDVKAV</sequence>
<feature type="chain" id="PRO_0000350220" description="Dual-specificity RNA methyltransferase RlmN">
    <location>
        <begin position="1"/>
        <end position="388"/>
    </location>
</feature>
<feature type="domain" description="Radical SAM core" evidence="2">
    <location>
        <begin position="115"/>
        <end position="354"/>
    </location>
</feature>
<feature type="active site" description="Proton acceptor" evidence="1">
    <location>
        <position position="109"/>
    </location>
</feature>
<feature type="active site" description="S-methylcysteine intermediate" evidence="1">
    <location>
        <position position="359"/>
    </location>
</feature>
<feature type="binding site" evidence="1">
    <location>
        <position position="129"/>
    </location>
    <ligand>
        <name>[4Fe-4S] cluster</name>
        <dbReference type="ChEBI" id="CHEBI:49883"/>
        <note>4Fe-4S-S-AdoMet</note>
    </ligand>
</feature>
<feature type="binding site" evidence="1">
    <location>
        <position position="133"/>
    </location>
    <ligand>
        <name>[4Fe-4S] cluster</name>
        <dbReference type="ChEBI" id="CHEBI:49883"/>
        <note>4Fe-4S-S-AdoMet</note>
    </ligand>
</feature>
<feature type="binding site" evidence="1">
    <location>
        <position position="136"/>
    </location>
    <ligand>
        <name>[4Fe-4S] cluster</name>
        <dbReference type="ChEBI" id="CHEBI:49883"/>
        <note>4Fe-4S-S-AdoMet</note>
    </ligand>
</feature>
<feature type="binding site" evidence="1">
    <location>
        <begin position="183"/>
        <end position="184"/>
    </location>
    <ligand>
        <name>S-adenosyl-L-methionine</name>
        <dbReference type="ChEBI" id="CHEBI:59789"/>
    </ligand>
</feature>
<feature type="binding site" evidence="1">
    <location>
        <position position="215"/>
    </location>
    <ligand>
        <name>S-adenosyl-L-methionine</name>
        <dbReference type="ChEBI" id="CHEBI:59789"/>
    </ligand>
</feature>
<feature type="binding site" evidence="1">
    <location>
        <begin position="237"/>
        <end position="239"/>
    </location>
    <ligand>
        <name>S-adenosyl-L-methionine</name>
        <dbReference type="ChEBI" id="CHEBI:59789"/>
    </ligand>
</feature>
<feature type="binding site" evidence="1">
    <location>
        <position position="316"/>
    </location>
    <ligand>
        <name>S-adenosyl-L-methionine</name>
        <dbReference type="ChEBI" id="CHEBI:59789"/>
    </ligand>
</feature>
<feature type="disulfide bond" description="(transient)" evidence="1">
    <location>
        <begin position="122"/>
        <end position="359"/>
    </location>
</feature>
<evidence type="ECO:0000255" key="1">
    <source>
        <dbReference type="HAMAP-Rule" id="MF_01849"/>
    </source>
</evidence>
<evidence type="ECO:0000255" key="2">
    <source>
        <dbReference type="PROSITE-ProRule" id="PRU01266"/>
    </source>
</evidence>
<proteinExistence type="inferred from homology"/>
<keyword id="KW-0004">4Fe-4S</keyword>
<keyword id="KW-0963">Cytoplasm</keyword>
<keyword id="KW-1015">Disulfide bond</keyword>
<keyword id="KW-0408">Iron</keyword>
<keyword id="KW-0411">Iron-sulfur</keyword>
<keyword id="KW-0479">Metal-binding</keyword>
<keyword id="KW-0489">Methyltransferase</keyword>
<keyword id="KW-0698">rRNA processing</keyword>
<keyword id="KW-0949">S-adenosyl-L-methionine</keyword>
<keyword id="KW-0808">Transferase</keyword>
<keyword id="KW-0819">tRNA processing</keyword>
<comment type="function">
    <text evidence="1">Specifically methylates position 2 of adenine 2503 in 23S rRNA and position 2 of adenine 37 in tRNAs. m2A2503 modification seems to play a crucial role in the proofreading step occurring at the peptidyl transferase center and thus would serve to optimize ribosomal fidelity.</text>
</comment>
<comment type="catalytic activity">
    <reaction evidence="1">
        <text>adenosine(2503) in 23S rRNA + 2 reduced [2Fe-2S]-[ferredoxin] + 2 S-adenosyl-L-methionine = 2-methyladenosine(2503) in 23S rRNA + 5'-deoxyadenosine + L-methionine + 2 oxidized [2Fe-2S]-[ferredoxin] + S-adenosyl-L-homocysteine</text>
        <dbReference type="Rhea" id="RHEA:42916"/>
        <dbReference type="Rhea" id="RHEA-COMP:10000"/>
        <dbReference type="Rhea" id="RHEA-COMP:10001"/>
        <dbReference type="Rhea" id="RHEA-COMP:10152"/>
        <dbReference type="Rhea" id="RHEA-COMP:10282"/>
        <dbReference type="ChEBI" id="CHEBI:17319"/>
        <dbReference type="ChEBI" id="CHEBI:33737"/>
        <dbReference type="ChEBI" id="CHEBI:33738"/>
        <dbReference type="ChEBI" id="CHEBI:57844"/>
        <dbReference type="ChEBI" id="CHEBI:57856"/>
        <dbReference type="ChEBI" id="CHEBI:59789"/>
        <dbReference type="ChEBI" id="CHEBI:74411"/>
        <dbReference type="ChEBI" id="CHEBI:74497"/>
        <dbReference type="EC" id="2.1.1.192"/>
    </reaction>
</comment>
<comment type="catalytic activity">
    <reaction evidence="1">
        <text>adenosine(37) in tRNA + 2 reduced [2Fe-2S]-[ferredoxin] + 2 S-adenosyl-L-methionine = 2-methyladenosine(37) in tRNA + 5'-deoxyadenosine + L-methionine + 2 oxidized [2Fe-2S]-[ferredoxin] + S-adenosyl-L-homocysteine</text>
        <dbReference type="Rhea" id="RHEA:43332"/>
        <dbReference type="Rhea" id="RHEA-COMP:10000"/>
        <dbReference type="Rhea" id="RHEA-COMP:10001"/>
        <dbReference type="Rhea" id="RHEA-COMP:10162"/>
        <dbReference type="Rhea" id="RHEA-COMP:10485"/>
        <dbReference type="ChEBI" id="CHEBI:17319"/>
        <dbReference type="ChEBI" id="CHEBI:33737"/>
        <dbReference type="ChEBI" id="CHEBI:33738"/>
        <dbReference type="ChEBI" id="CHEBI:57844"/>
        <dbReference type="ChEBI" id="CHEBI:57856"/>
        <dbReference type="ChEBI" id="CHEBI:59789"/>
        <dbReference type="ChEBI" id="CHEBI:74411"/>
        <dbReference type="ChEBI" id="CHEBI:74497"/>
        <dbReference type="EC" id="2.1.1.192"/>
    </reaction>
</comment>
<comment type="cofactor">
    <cofactor evidence="1">
        <name>[4Fe-4S] cluster</name>
        <dbReference type="ChEBI" id="CHEBI:49883"/>
    </cofactor>
    <text evidence="1">Binds 1 [4Fe-4S] cluster. The cluster is coordinated with 3 cysteines and an exchangeable S-adenosyl-L-methionine.</text>
</comment>
<comment type="subcellular location">
    <subcellularLocation>
        <location evidence="1">Cytoplasm</location>
    </subcellularLocation>
</comment>
<comment type="miscellaneous">
    <text evidence="1">Reaction proceeds by a ping-pong mechanism involving intermediate methylation of a conserved cysteine residue.</text>
</comment>
<comment type="similarity">
    <text evidence="1">Belongs to the radical SAM superfamily. RlmN family.</text>
</comment>
<organism>
    <name type="scientific">Klebsiella pneumoniae subsp. pneumoniae (strain ATCC 700721 / MGH 78578)</name>
    <dbReference type="NCBI Taxonomy" id="272620"/>
    <lineage>
        <taxon>Bacteria</taxon>
        <taxon>Pseudomonadati</taxon>
        <taxon>Pseudomonadota</taxon>
        <taxon>Gammaproteobacteria</taxon>
        <taxon>Enterobacterales</taxon>
        <taxon>Enterobacteriaceae</taxon>
        <taxon>Klebsiella/Raoultella group</taxon>
        <taxon>Klebsiella</taxon>
        <taxon>Klebsiella pneumoniae complex</taxon>
    </lineage>
</organism>
<protein>
    <recommendedName>
        <fullName evidence="1">Dual-specificity RNA methyltransferase RlmN</fullName>
        <ecNumber evidence="1">2.1.1.192</ecNumber>
    </recommendedName>
    <alternativeName>
        <fullName evidence="1">23S rRNA (adenine(2503)-C(2))-methyltransferase</fullName>
    </alternativeName>
    <alternativeName>
        <fullName evidence="1">23S rRNA m2A2503 methyltransferase</fullName>
    </alternativeName>
    <alternativeName>
        <fullName evidence="1">Ribosomal RNA large subunit methyltransferase N</fullName>
    </alternativeName>
    <alternativeName>
        <fullName evidence="1">tRNA (adenine(37)-C(2))-methyltransferase</fullName>
    </alternativeName>
    <alternativeName>
        <fullName evidence="1">tRNA m2A37 methyltransferase</fullName>
    </alternativeName>
</protein>